<protein>
    <recommendedName>
        <fullName>V-type proton ATPase subunit C 1</fullName>
        <shortName>V-ATPase subunit C 1</shortName>
    </recommendedName>
    <alternativeName>
        <fullName>Vacuolar proton pump subunit C 1</fullName>
    </alternativeName>
</protein>
<reference key="1">
    <citation type="submission" date="2006-10" db="EMBL/GenBank/DDBJ databases">
        <authorList>
            <consortium name="Sanger Xenopus tropicalis EST/cDNA project"/>
        </authorList>
    </citation>
    <scope>NUCLEOTIDE SEQUENCE [LARGE SCALE MRNA]</scope>
    <source>
        <tissue>Gastrula</tissue>
    </source>
</reference>
<reference key="2">
    <citation type="submission" date="2003-12" db="EMBL/GenBank/DDBJ databases">
        <authorList>
            <consortium name="NIH - Xenopus Gene Collection (XGC) project"/>
        </authorList>
    </citation>
    <scope>NUCLEOTIDE SEQUENCE [LARGE SCALE MRNA]</scope>
    <source>
        <tissue>Embryo</tissue>
    </source>
</reference>
<gene>
    <name type="primary">atp6v1c1</name>
    <name type="ORF">TGas120a24.1</name>
</gene>
<organism>
    <name type="scientific">Xenopus tropicalis</name>
    <name type="common">Western clawed frog</name>
    <name type="synonym">Silurana tropicalis</name>
    <dbReference type="NCBI Taxonomy" id="8364"/>
    <lineage>
        <taxon>Eukaryota</taxon>
        <taxon>Metazoa</taxon>
        <taxon>Chordata</taxon>
        <taxon>Craniata</taxon>
        <taxon>Vertebrata</taxon>
        <taxon>Euteleostomi</taxon>
        <taxon>Amphibia</taxon>
        <taxon>Batrachia</taxon>
        <taxon>Anura</taxon>
        <taxon>Pipoidea</taxon>
        <taxon>Pipidae</taxon>
        <taxon>Xenopodinae</taxon>
        <taxon>Xenopus</taxon>
        <taxon>Silurana</taxon>
    </lineage>
</organism>
<sequence length="382" mass="44038">MTEFWLISAPGEKTCQQTWEKLMAATTKNNNLSTNAKFNIPDLKVGTLDVLVGLSDELAKLDAFVEGTVKKVAQYMADVLEDSRDKVQENLLANGVDLVTYITRFQWDMAKYPIKQSLKNISEIIAKGVTQIDNDLKARASAYNNLKGNLQNLERKNAGSLITRSLAEIVKKDDFVLDSEYLITLLVVVPKNNYNDWVKQYETLAEMVVPRSSNVLSEDQDSYLCNVTLFRKAVDDFRHKARENKFVVRDFQYNEEEMKADKEEMNRLSTDKKKQFGPLVRWLKVNFSEAFIAWIHVKALRVFVESVLRYGLPVNFQAMLLQPNKKTMKKLREVLYDLYKHLDSSAASIIDAPMDIPGLNLSQQEYYPYVYYKIDCNLLEFK</sequence>
<keyword id="KW-0007">Acetylation</keyword>
<keyword id="KW-0375">Hydrogen ion transport</keyword>
<keyword id="KW-0406">Ion transport</keyword>
<keyword id="KW-1185">Reference proteome</keyword>
<keyword id="KW-0813">Transport</keyword>
<feature type="initiator methionine" description="Removed" evidence="1">
    <location>
        <position position="1"/>
    </location>
</feature>
<feature type="chain" id="PRO_0000307375" description="V-type proton ATPase subunit C 1">
    <location>
        <begin position="2"/>
        <end position="382"/>
    </location>
</feature>
<feature type="modified residue" description="N-acetylthreonine" evidence="1">
    <location>
        <position position="2"/>
    </location>
</feature>
<comment type="function">
    <text evidence="2 3 4">Subunit of the V1 complex of vacuolar(H+)-ATPase (V-ATPase), a multisubunit enzyme composed of a peripheral complex (V1) that hydrolyzes ATP and a membrane integral complex (V0) that translocates protons (By similarity). V-ATPase is responsible for acidifying and maintaining the pH of intracellular compartments and in some cell types, is targeted to the plasma membrane, where it is responsible for acidifying the extracellular environment (By similarity). Subunit C is necessary for the assembly of the catalytic sector of the enzyme and is likely to have a specific function in its catalytic activity (By similarity).</text>
</comment>
<comment type="subunit">
    <text evidence="3">V-ATPase is a heteromultimeric enzyme made up of two complexes: the ATP-hydrolytic V1 complex and the proton translocation V0 complex (By similarity). The V1 complex consists of three catalytic AB heterodimers that form a heterohexamer, three peripheral stalks each consisting of EG heterodimers, one central rotor including subunits D and F, and the regulatory subunits C and H (By similarity). The proton translocation complex V0 consists of the proton transport subunit a, a ring of proteolipid subunits c9c'', rotary subunit d, subunits e and f, and two accessory subunits (By similarity).</text>
</comment>
<comment type="similarity">
    <text evidence="5">Belongs to the V-ATPase C subunit family.</text>
</comment>
<proteinExistence type="evidence at transcript level"/>
<evidence type="ECO:0000250" key="1"/>
<evidence type="ECO:0000250" key="2">
    <source>
        <dbReference type="UniProtKB" id="P21282"/>
    </source>
</evidence>
<evidence type="ECO:0000250" key="3">
    <source>
        <dbReference type="UniProtKB" id="P21283"/>
    </source>
</evidence>
<evidence type="ECO:0000250" key="4">
    <source>
        <dbReference type="UniProtKB" id="P31412"/>
    </source>
</evidence>
<evidence type="ECO:0000305" key="5"/>
<name>VATC1_XENTR</name>
<accession>Q6P4Y9</accession>
<dbReference type="EMBL" id="CR848095">
    <property type="protein sequence ID" value="CAJ81546.1"/>
    <property type="molecule type" value="mRNA"/>
</dbReference>
<dbReference type="EMBL" id="BC063194">
    <property type="protein sequence ID" value="AAH63194.1"/>
    <property type="molecule type" value="mRNA"/>
</dbReference>
<dbReference type="RefSeq" id="NP_989172.1">
    <property type="nucleotide sequence ID" value="NM_203841.1"/>
</dbReference>
<dbReference type="RefSeq" id="XP_012819882.1">
    <property type="nucleotide sequence ID" value="XM_012964428.3"/>
</dbReference>
<dbReference type="RefSeq" id="XP_012819884.1">
    <property type="nucleotide sequence ID" value="XM_012964430.3"/>
</dbReference>
<dbReference type="RefSeq" id="XP_012819885.1">
    <property type="nucleotide sequence ID" value="XM_012964431.2"/>
</dbReference>
<dbReference type="RefSeq" id="XP_012819886.1">
    <property type="nucleotide sequence ID" value="XM_012964432.3"/>
</dbReference>
<dbReference type="RefSeq" id="XP_012819887.1">
    <property type="nucleotide sequence ID" value="XM_012964433.3"/>
</dbReference>
<dbReference type="RefSeq" id="XP_031759150.1">
    <property type="nucleotide sequence ID" value="XM_031903290.1"/>
</dbReference>
<dbReference type="SMR" id="Q6P4Y9"/>
<dbReference type="FunCoup" id="Q6P4Y9">
    <property type="interactions" value="2050"/>
</dbReference>
<dbReference type="STRING" id="8364.ENSXETP00000017872"/>
<dbReference type="DNASU" id="394779"/>
<dbReference type="GeneID" id="394779"/>
<dbReference type="KEGG" id="xtr:394779"/>
<dbReference type="AGR" id="Xenbase:XB-GENE-948409"/>
<dbReference type="CTD" id="528"/>
<dbReference type="Xenbase" id="XB-GENE-948409">
    <property type="gene designation" value="atp6v1c1"/>
</dbReference>
<dbReference type="HOGENOM" id="CLU_017554_3_0_1"/>
<dbReference type="InParanoid" id="Q6P4Y9"/>
<dbReference type="OMA" id="VMIWIHV"/>
<dbReference type="OrthoDB" id="6605928at2759"/>
<dbReference type="PhylomeDB" id="Q6P4Y9"/>
<dbReference type="Reactome" id="R-XTR-1222556">
    <property type="pathway name" value="ROS and RNS production in phagocytes"/>
</dbReference>
<dbReference type="Reactome" id="R-XTR-77387">
    <property type="pathway name" value="Insulin receptor recycling"/>
</dbReference>
<dbReference type="Reactome" id="R-XTR-917977">
    <property type="pathway name" value="Transferrin endocytosis and recycling"/>
</dbReference>
<dbReference type="Reactome" id="R-XTR-9639288">
    <property type="pathway name" value="Amino acids regulate mTORC1"/>
</dbReference>
<dbReference type="Reactome" id="R-XTR-983712">
    <property type="pathway name" value="Ion channel transport"/>
</dbReference>
<dbReference type="Proteomes" id="UP000008143">
    <property type="component" value="Chromosome 6"/>
</dbReference>
<dbReference type="Bgee" id="ENSXETG00000004115">
    <property type="expression patterns" value="Expressed in brain and 15 other cell types or tissues"/>
</dbReference>
<dbReference type="ExpressionAtlas" id="Q6P4Y9">
    <property type="expression patterns" value="baseline and differential"/>
</dbReference>
<dbReference type="GO" id="GO:0033180">
    <property type="term" value="C:proton-transporting V-type ATPase, V1 domain"/>
    <property type="evidence" value="ECO:0007669"/>
    <property type="project" value="InterPro"/>
</dbReference>
<dbReference type="GO" id="GO:0046961">
    <property type="term" value="F:proton-transporting ATPase activity, rotational mechanism"/>
    <property type="evidence" value="ECO:0007669"/>
    <property type="project" value="InterPro"/>
</dbReference>
<dbReference type="CDD" id="cd14785">
    <property type="entry name" value="V-ATPase_C"/>
    <property type="match status" value="1"/>
</dbReference>
<dbReference type="FunFam" id="1.20.1460.10:FF:000004">
    <property type="entry name" value="V-type proton ATPase subunit C"/>
    <property type="match status" value="1"/>
</dbReference>
<dbReference type="FunFam" id="3.30.70.100:FF:000002">
    <property type="entry name" value="V-type proton ATPase subunit C"/>
    <property type="match status" value="1"/>
</dbReference>
<dbReference type="FunFam" id="3.30.70.1180:FF:000003">
    <property type="entry name" value="V-type proton ATPase subunit C"/>
    <property type="match status" value="1"/>
</dbReference>
<dbReference type="Gene3D" id="3.30.70.100">
    <property type="match status" value="1"/>
</dbReference>
<dbReference type="Gene3D" id="1.20.1460.10">
    <property type="entry name" value="subunit c (vma5p) of the yeast v-atpase, domain 2"/>
    <property type="match status" value="1"/>
</dbReference>
<dbReference type="Gene3D" id="3.30.70.1180">
    <property type="entry name" value="Vacuolar atp synthase subunit c, domain 1"/>
    <property type="match status" value="1"/>
</dbReference>
<dbReference type="InterPro" id="IPR004907">
    <property type="entry name" value="ATPase_V1-cplx_csu"/>
</dbReference>
<dbReference type="InterPro" id="IPR036132">
    <property type="entry name" value="Vac_ATP_synth_c_sf"/>
</dbReference>
<dbReference type="PANTHER" id="PTHR10137">
    <property type="entry name" value="V-TYPE PROTON ATPASE SUBUNIT C"/>
    <property type="match status" value="1"/>
</dbReference>
<dbReference type="PANTHER" id="PTHR10137:SF5">
    <property type="entry name" value="V-TYPE PROTON ATPASE SUBUNIT C 1"/>
    <property type="match status" value="1"/>
</dbReference>
<dbReference type="Pfam" id="PF03223">
    <property type="entry name" value="V-ATPase_C"/>
    <property type="match status" value="1"/>
</dbReference>
<dbReference type="SUPFAM" id="SSF118203">
    <property type="entry name" value="Vacuolar ATP synthase subunit C"/>
    <property type="match status" value="1"/>
</dbReference>